<dbReference type="EC" id="6.3.1.1" evidence="2"/>
<dbReference type="EMBL" id="AE014075">
    <property type="protein sequence ID" value="AAN83104.1"/>
    <property type="molecule type" value="Genomic_DNA"/>
</dbReference>
<dbReference type="RefSeq" id="WP_000845107.1">
    <property type="nucleotide sequence ID" value="NZ_CP051263.1"/>
</dbReference>
<dbReference type="SMR" id="P63623"/>
<dbReference type="STRING" id="199310.c4672"/>
<dbReference type="GeneID" id="75173978"/>
<dbReference type="KEGG" id="ecc:c4672"/>
<dbReference type="eggNOG" id="COG2502">
    <property type="taxonomic scope" value="Bacteria"/>
</dbReference>
<dbReference type="HOGENOM" id="CLU_071543_0_0_6"/>
<dbReference type="BioCyc" id="ECOL199310:C4672-MONOMER"/>
<dbReference type="UniPathway" id="UPA00134">
    <property type="reaction ID" value="UER00194"/>
</dbReference>
<dbReference type="Proteomes" id="UP000001410">
    <property type="component" value="Chromosome"/>
</dbReference>
<dbReference type="GO" id="GO:0005829">
    <property type="term" value="C:cytosol"/>
    <property type="evidence" value="ECO:0007669"/>
    <property type="project" value="TreeGrafter"/>
</dbReference>
<dbReference type="GO" id="GO:0004071">
    <property type="term" value="F:aspartate-ammonia ligase activity"/>
    <property type="evidence" value="ECO:0007669"/>
    <property type="project" value="UniProtKB-UniRule"/>
</dbReference>
<dbReference type="GO" id="GO:0005524">
    <property type="term" value="F:ATP binding"/>
    <property type="evidence" value="ECO:0007669"/>
    <property type="project" value="UniProtKB-UniRule"/>
</dbReference>
<dbReference type="GO" id="GO:0070981">
    <property type="term" value="P:L-asparagine biosynthetic process"/>
    <property type="evidence" value="ECO:0007669"/>
    <property type="project" value="UniProtKB-UniRule"/>
</dbReference>
<dbReference type="CDD" id="cd00645">
    <property type="entry name" value="AsnA"/>
    <property type="match status" value="1"/>
</dbReference>
<dbReference type="FunFam" id="3.30.930.10:FF:000025">
    <property type="entry name" value="Aspartate--ammonia ligase"/>
    <property type="match status" value="1"/>
</dbReference>
<dbReference type="Gene3D" id="3.30.930.10">
    <property type="entry name" value="Bira Bifunctional Protein, Domain 2"/>
    <property type="match status" value="1"/>
</dbReference>
<dbReference type="HAMAP" id="MF_00555">
    <property type="entry name" value="AsnA"/>
    <property type="match status" value="1"/>
</dbReference>
<dbReference type="InterPro" id="IPR006195">
    <property type="entry name" value="aa-tRNA-synth_II"/>
</dbReference>
<dbReference type="InterPro" id="IPR045864">
    <property type="entry name" value="aa-tRNA-synth_II/BPL/LPL"/>
</dbReference>
<dbReference type="InterPro" id="IPR004618">
    <property type="entry name" value="AsnA"/>
</dbReference>
<dbReference type="NCBIfam" id="TIGR00669">
    <property type="entry name" value="asnA"/>
    <property type="match status" value="1"/>
</dbReference>
<dbReference type="PANTHER" id="PTHR30073">
    <property type="entry name" value="ASPARTATE--AMMONIA LIGASE"/>
    <property type="match status" value="1"/>
</dbReference>
<dbReference type="PANTHER" id="PTHR30073:SF5">
    <property type="entry name" value="ASPARTATE--AMMONIA LIGASE"/>
    <property type="match status" value="1"/>
</dbReference>
<dbReference type="Pfam" id="PF03590">
    <property type="entry name" value="AsnA"/>
    <property type="match status" value="1"/>
</dbReference>
<dbReference type="PIRSF" id="PIRSF001555">
    <property type="entry name" value="Asp_ammon_ligase"/>
    <property type="match status" value="1"/>
</dbReference>
<dbReference type="SUPFAM" id="SSF55681">
    <property type="entry name" value="Class II aaRS and biotin synthetases"/>
    <property type="match status" value="1"/>
</dbReference>
<dbReference type="PROSITE" id="PS50862">
    <property type="entry name" value="AA_TRNA_LIGASE_II"/>
    <property type="match status" value="1"/>
</dbReference>
<reference key="1">
    <citation type="journal article" date="2002" name="Proc. Natl. Acad. Sci. U.S.A.">
        <title>Extensive mosaic structure revealed by the complete genome sequence of uropathogenic Escherichia coli.</title>
        <authorList>
            <person name="Welch R.A."/>
            <person name="Burland V."/>
            <person name="Plunkett G. III"/>
            <person name="Redford P."/>
            <person name="Roesch P."/>
            <person name="Rasko D."/>
            <person name="Buckles E.L."/>
            <person name="Liou S.-R."/>
            <person name="Boutin A."/>
            <person name="Hackett J."/>
            <person name="Stroud D."/>
            <person name="Mayhew G.F."/>
            <person name="Rose D.J."/>
            <person name="Zhou S."/>
            <person name="Schwartz D.C."/>
            <person name="Perna N.T."/>
            <person name="Mobley H.L.T."/>
            <person name="Donnenberg M.S."/>
            <person name="Blattner F.R."/>
        </authorList>
    </citation>
    <scope>NUCLEOTIDE SEQUENCE [LARGE SCALE GENOMIC DNA]</scope>
    <source>
        <strain>CFT073 / ATCC 700928 / UPEC</strain>
    </source>
</reference>
<proteinExistence type="inferred from homology"/>
<organism>
    <name type="scientific">Escherichia coli O6:H1 (strain CFT073 / ATCC 700928 / UPEC)</name>
    <dbReference type="NCBI Taxonomy" id="199310"/>
    <lineage>
        <taxon>Bacteria</taxon>
        <taxon>Pseudomonadati</taxon>
        <taxon>Pseudomonadota</taxon>
        <taxon>Gammaproteobacteria</taxon>
        <taxon>Enterobacterales</taxon>
        <taxon>Enterobacteriaceae</taxon>
        <taxon>Escherichia</taxon>
    </lineage>
</organism>
<keyword id="KW-0028">Amino-acid biosynthesis</keyword>
<keyword id="KW-0061">Asparagine biosynthesis</keyword>
<keyword id="KW-0067">ATP-binding</keyword>
<keyword id="KW-0963">Cytoplasm</keyword>
<keyword id="KW-0436">Ligase</keyword>
<keyword id="KW-0547">Nucleotide-binding</keyword>
<keyword id="KW-1185">Reference proteome</keyword>
<sequence length="330" mass="36650">MKTAYIAKQRQISFVKSHFSRQLEERLGLIEVQAPILSRVGDGTQDNLSGCEKAVQVKVKALPDAQFEVVHSLAKWKRQTLGQHDFSAGEGLYTHMKALRPDEDRLSPLHSVYVDQWDWERVMGDGERQFSTLKSTVEAIWAGIKATEAAVSEEFGLAPFLPDQIHFVHSQELLSRYPDLDAKGRERAIAKDLGAVFLVGIGGKLSDGHRHDVRAPDYDDWSTPSELGHAGLNGDILVWNPVLEDAFELSSMGIRVDADTLKHQLALTGDEDRLQLEWHQALLRGEMPQTIGGGIGQSRLTMLLLQLPHIGQVQCGVWPAAVRESVPSLL</sequence>
<feature type="chain" id="PRO_0000195874" description="Aspartate--ammonia ligase">
    <location>
        <begin position="1"/>
        <end position="330"/>
    </location>
</feature>
<evidence type="ECO:0000250" key="1"/>
<evidence type="ECO:0000255" key="2">
    <source>
        <dbReference type="HAMAP-Rule" id="MF_00555"/>
    </source>
</evidence>
<comment type="catalytic activity">
    <reaction evidence="2">
        <text>L-aspartate + NH4(+) + ATP = L-asparagine + AMP + diphosphate + H(+)</text>
        <dbReference type="Rhea" id="RHEA:11372"/>
        <dbReference type="ChEBI" id="CHEBI:15378"/>
        <dbReference type="ChEBI" id="CHEBI:28938"/>
        <dbReference type="ChEBI" id="CHEBI:29991"/>
        <dbReference type="ChEBI" id="CHEBI:30616"/>
        <dbReference type="ChEBI" id="CHEBI:33019"/>
        <dbReference type="ChEBI" id="CHEBI:58048"/>
        <dbReference type="ChEBI" id="CHEBI:456215"/>
        <dbReference type="EC" id="6.3.1.1"/>
    </reaction>
</comment>
<comment type="pathway">
    <text evidence="2">Amino-acid biosynthesis; L-asparagine biosynthesis; L-asparagine from L-aspartate (ammonia route): step 1/1.</text>
</comment>
<comment type="subunit">
    <text evidence="1">Homodimer.</text>
</comment>
<comment type="subcellular location">
    <subcellularLocation>
        <location evidence="2">Cytoplasm</location>
    </subcellularLocation>
</comment>
<comment type="similarity">
    <text evidence="2">Belongs to the class-II aminoacyl-tRNA synthetase family. AsnA subfamily.</text>
</comment>
<protein>
    <recommendedName>
        <fullName evidence="2">Aspartate--ammonia ligase</fullName>
        <ecNumber evidence="2">6.3.1.1</ecNumber>
    </recommendedName>
    <alternativeName>
        <fullName evidence="2">Asparagine synthetase A</fullName>
    </alternativeName>
</protein>
<gene>
    <name evidence="2" type="primary">asnA</name>
    <name type="ordered locus">c4672</name>
</gene>
<accession>P63623</accession>
<accession>Q8XAX8</accession>
<name>ASNA_ECOL6</name>